<reference key="1">
    <citation type="journal article" date="1986" name="EMBO J.">
        <title>The sequence of carnation etched ring virus DNA: comparison with cauliflower mosaic virus and retroviruses.</title>
        <authorList>
            <person name="Hull R."/>
            <person name="Sadler J."/>
            <person name="Longstaff M."/>
        </authorList>
    </citation>
    <scope>NUCLEOTIDE SEQUENCE [GENOMIC DNA]</scope>
</reference>
<protein>
    <recommendedName>
        <fullName>Movement protein</fullName>
        <shortName>Mov</shortName>
    </recommendedName>
    <alternativeName>
        <fullName>Cell-to-cell transport protein</fullName>
    </alternativeName>
</protein>
<proteinExistence type="inferred from homology"/>
<gene>
    <name type="ORF">ORF I</name>
</gene>
<organismHost>
    <name type="scientific">Dianthus caryophyllus</name>
    <name type="common">Carnation</name>
    <name type="synonym">Clove pink</name>
    <dbReference type="NCBI Taxonomy" id="3570"/>
</organismHost>
<organism>
    <name type="scientific">Carnation etched ring virus</name>
    <name type="common">CERV</name>
    <dbReference type="NCBI Taxonomy" id="10640"/>
    <lineage>
        <taxon>Viruses</taxon>
        <taxon>Riboviria</taxon>
        <taxon>Pararnavirae</taxon>
        <taxon>Artverviricota</taxon>
        <taxon>Revtraviricetes</taxon>
        <taxon>Ortervirales</taxon>
        <taxon>Caulimoviridae</taxon>
        <taxon>Caulimovirus</taxon>
        <taxon>Caulimovirus incidianthi</taxon>
    </lineage>
</organism>
<feature type="chain" id="PRO_0000222064" description="Movement protein">
    <location>
        <begin position="1"/>
        <end position="319"/>
    </location>
</feature>
<feature type="region of interest" description="Disordered" evidence="2">
    <location>
        <begin position="1"/>
        <end position="20"/>
    </location>
</feature>
<feature type="coiled-coil region" evidence="1">
    <location>
        <begin position="289"/>
        <end position="319"/>
    </location>
</feature>
<accession>P05396</accession>
<keyword id="KW-0175">Coiled coil</keyword>
<keyword id="KW-1031">Host cell junction</keyword>
<keyword id="KW-1185">Reference proteome</keyword>
<keyword id="KW-0813">Transport</keyword>
<keyword id="KW-0916">Viral movement protein</keyword>
<evidence type="ECO:0000250" key="1"/>
<evidence type="ECO:0000256" key="2">
    <source>
        <dbReference type="SAM" id="MobiDB-lite"/>
    </source>
</evidence>
<evidence type="ECO:0000305" key="3"/>
<comment type="function">
    <text evidence="1">Transports viral genome to neighboring plant cells directly through plasmosdesmata, without any budding. The movement protein allows efficient cell to cell propagation, by bypassing the host cell wall barrier. Acts by forming tubules structures that increase the size exclusion limit (SEL) of plasmodesmata, thereby allowing viral ribonucleocapsids to spread directly to neighboring cells (By similarity).</text>
</comment>
<comment type="subunit">
    <text>Homotrimer, through the coiled-coil domain. Interacts with VAP.</text>
</comment>
<comment type="subcellular location">
    <subcellularLocation>
        <location evidence="1">Host cell junction</location>
        <location evidence="1">Host plasmodesma</location>
    </subcellularLocation>
    <text>Assembles in tubules that are embedded within modified plasmodesmata.</text>
</comment>
<comment type="similarity">
    <text evidence="3">Belongs to the caulimoviridae movement protein family.</text>
</comment>
<dbReference type="EMBL" id="X04658">
    <property type="protein sequence ID" value="CAA28356.1"/>
    <property type="molecule type" value="Genomic_DNA"/>
</dbReference>
<dbReference type="PIR" id="S00850">
    <property type="entry name" value="S00850"/>
</dbReference>
<dbReference type="RefSeq" id="NP_612573.1">
    <property type="nucleotide sequence ID" value="NC_003498.1"/>
</dbReference>
<dbReference type="KEGG" id="vg:935425"/>
<dbReference type="OrthoDB" id="10370at10239"/>
<dbReference type="Proteomes" id="UP000008446">
    <property type="component" value="Segment"/>
</dbReference>
<dbReference type="GO" id="GO:0044219">
    <property type="term" value="C:host cell plasmodesma"/>
    <property type="evidence" value="ECO:0007669"/>
    <property type="project" value="UniProtKB-SubCell"/>
</dbReference>
<dbReference type="GO" id="GO:0046740">
    <property type="term" value="P:transport of virus in host, cell to cell"/>
    <property type="evidence" value="ECO:0007669"/>
    <property type="project" value="UniProtKB-KW"/>
</dbReference>
<dbReference type="InterPro" id="IPR051596">
    <property type="entry name" value="Caulimoviridae_Movement"/>
</dbReference>
<dbReference type="InterPro" id="IPR028919">
    <property type="entry name" value="Viral_movement"/>
</dbReference>
<dbReference type="PANTHER" id="PTHR47599">
    <property type="entry name" value="CELL-TO-CELL MOVEMENT PROTEIN"/>
    <property type="match status" value="1"/>
</dbReference>
<dbReference type="PANTHER" id="PTHR47599:SF3">
    <property type="entry name" value="CELL-TO-CELL MOVEMENT PROTEIN"/>
    <property type="match status" value="1"/>
</dbReference>
<dbReference type="Pfam" id="PF01107">
    <property type="entry name" value="MP"/>
    <property type="match status" value="1"/>
</dbReference>
<sequence>MNSSVEKQNSEIPEKENEEFTFQDNSQGFELEFSTNKKTLSKIQKANLSLKTNDAFNISFLKAFSRKNHIYYHVNYKEFSVDICDTHGKNYLPLVTKSEIKKNLDKIKDEKVRSTISDIHFGAIKVLIKARFREGINSPIKMALIDDRITDRQDSILGAAHGNLVYGKFMFTVYPKYTTSILDQRLDRTLAFIHHFERNDLMRKGDKVFSITYLVAYALANSHHSIDYKEKDAIEIDDVFSEIGSVKSPTFTELDPEPNSWAIDIAQGKQPIGFKPKPTVSNNFLRFDKETSPSSSHQKSLEEISDKIDTLVVKLNNIS</sequence>
<name>MVP_CERV</name>